<organism>
    <name type="scientific">Salmonella typhimurium (strain LT2 / SGSC1412 / ATCC 700720)</name>
    <dbReference type="NCBI Taxonomy" id="99287"/>
    <lineage>
        <taxon>Bacteria</taxon>
        <taxon>Pseudomonadati</taxon>
        <taxon>Pseudomonadota</taxon>
        <taxon>Gammaproteobacteria</taxon>
        <taxon>Enterobacterales</taxon>
        <taxon>Enterobacteriaceae</taxon>
        <taxon>Salmonella</taxon>
    </lineage>
</organism>
<proteinExistence type="inferred from homology"/>
<evidence type="ECO:0000269" key="1">
    <source>
    </source>
</evidence>
<evidence type="ECO:0000305" key="2"/>
<protein>
    <recommendedName>
        <fullName>Cobalt-precorrin-5A hydrolase</fullName>
        <ecNumber>3.7.1.12</ecNumber>
    </recommendedName>
</protein>
<dbReference type="EC" id="3.7.1.12"/>
<dbReference type="EMBL" id="L12006">
    <property type="protein sequence ID" value="AAA27259.1"/>
    <property type="molecule type" value="Genomic_DNA"/>
</dbReference>
<dbReference type="EMBL" id="AE006468">
    <property type="protein sequence ID" value="AAL20932.1"/>
    <property type="molecule type" value="Genomic_DNA"/>
</dbReference>
<dbReference type="RefSeq" id="NP_460973.1">
    <property type="nucleotide sequence ID" value="NC_003197.2"/>
</dbReference>
<dbReference type="RefSeq" id="WP_001098914.1">
    <property type="nucleotide sequence ID" value="NC_003197.2"/>
</dbReference>
<dbReference type="SMR" id="Q05631"/>
<dbReference type="STRING" id="99287.STM2028"/>
<dbReference type="PaxDb" id="99287-STM2028"/>
<dbReference type="DNASU" id="1253549"/>
<dbReference type="GeneID" id="1253549"/>
<dbReference type="KEGG" id="stm:STM2028"/>
<dbReference type="PATRIC" id="fig|99287.12.peg.2150"/>
<dbReference type="HOGENOM" id="CLU_028397_0_0_6"/>
<dbReference type="OMA" id="GIGCNRG"/>
<dbReference type="PhylomeDB" id="Q05631"/>
<dbReference type="BioCyc" id="MetaCyc:MONOMER-13219"/>
<dbReference type="BioCyc" id="SENT99287:STM2028-MONOMER"/>
<dbReference type="UniPathway" id="UPA00148">
    <property type="reaction ID" value="UER00561"/>
</dbReference>
<dbReference type="Proteomes" id="UP000001014">
    <property type="component" value="Chromosome"/>
</dbReference>
<dbReference type="GO" id="GO:0043779">
    <property type="term" value="F:cobalt-precorrin-5A acetaldehyde-lyase activity"/>
    <property type="evidence" value="ECO:0007669"/>
    <property type="project" value="UniProtKB-EC"/>
</dbReference>
<dbReference type="GO" id="GO:0009236">
    <property type="term" value="P:cobalamin biosynthetic process"/>
    <property type="evidence" value="ECO:0007669"/>
    <property type="project" value="UniProtKB-UniPathway"/>
</dbReference>
<dbReference type="Gene3D" id="3.40.50.11220">
    <property type="match status" value="1"/>
</dbReference>
<dbReference type="Gene3D" id="3.30.420.180">
    <property type="entry name" value="CobE/GbiG C-terminal domain"/>
    <property type="match status" value="1"/>
</dbReference>
<dbReference type="InterPro" id="IPR052553">
    <property type="entry name" value="CbiG_hydrolase"/>
</dbReference>
<dbReference type="InterPro" id="IPR021745">
    <property type="entry name" value="CbiG_mid"/>
</dbReference>
<dbReference type="InterPro" id="IPR021744">
    <property type="entry name" value="CbiG_N"/>
</dbReference>
<dbReference type="InterPro" id="IPR002750">
    <property type="entry name" value="CobE/GbiG_C"/>
</dbReference>
<dbReference type="InterPro" id="IPR036518">
    <property type="entry name" value="CobE/GbiG_C_sf"/>
</dbReference>
<dbReference type="InterPro" id="IPR038029">
    <property type="entry name" value="GbiG_N_sf"/>
</dbReference>
<dbReference type="NCBIfam" id="NF004463">
    <property type="entry name" value="PRK05788.1-1"/>
    <property type="match status" value="1"/>
</dbReference>
<dbReference type="PANTHER" id="PTHR37477">
    <property type="entry name" value="COBALT-PRECORRIN-5A HYDROLASE"/>
    <property type="match status" value="1"/>
</dbReference>
<dbReference type="PANTHER" id="PTHR37477:SF1">
    <property type="entry name" value="COBALT-PRECORRIN-5A HYDROLASE"/>
    <property type="match status" value="1"/>
</dbReference>
<dbReference type="Pfam" id="PF01890">
    <property type="entry name" value="CbiG_C"/>
    <property type="match status" value="1"/>
</dbReference>
<dbReference type="Pfam" id="PF11761">
    <property type="entry name" value="CbiG_mid"/>
    <property type="match status" value="1"/>
</dbReference>
<dbReference type="Pfam" id="PF11760">
    <property type="entry name" value="CbiG_N"/>
    <property type="match status" value="1"/>
</dbReference>
<dbReference type="SUPFAM" id="SSF159672">
    <property type="entry name" value="CbiG N-terminal domain-like"/>
    <property type="match status" value="1"/>
</dbReference>
<dbReference type="SUPFAM" id="SSF159664">
    <property type="entry name" value="CobE/GbiG C-terminal domain-like"/>
    <property type="match status" value="1"/>
</dbReference>
<feature type="chain" id="PRO_0000089373" description="Cobalt-precorrin-5A hydrolase">
    <location>
        <begin position="1"/>
        <end position="351"/>
    </location>
</feature>
<accession>Q05631</accession>
<sequence>MNTVKPESIALFCLTPGGVALAKRLAAMLPLTCFTSEKLREEGFIPFDGGFANTARQAFTTYTALIFIGATGIAVRVLAPLVNDKFSDPAVVVIDERGQHVISLLSGHAGGANALTRYLAGMLGADPVITTATDVNEMSALDTLAFQLNARMSDLRTAVKTVNQMLVSHQRVGLWWDAELTEEIGQCDIRGFIPVDDLQRLPELDALICVSLRNDLPELPVPHWKLVPQRVVAGIGCRRDTPFPLLATLLARQLEAQKLDPLALKAIGSVTLKKGEPGLIQLASCCRVPFKTFTAEALREFEHHFPGSGFVRKTVGVGSVSGPAAWLLSQGQLLGETLREQGVTITLGVAH</sequence>
<gene>
    <name type="primary">cbiG</name>
    <name type="ordered locus">STM2028</name>
</gene>
<name>CBIG_SALTY</name>
<comment type="function">
    <text evidence="1">Catalyzes the hydrolysis of the ring A acetate delta-lactone of cobalt-precorrin-5A resulting in the loss of the C-20 carbon and its attached methyl group in the form of acetaldehyde.</text>
</comment>
<comment type="catalytic activity">
    <reaction>
        <text>Co-precorrin-5A + H2O = Co-precorrin-5B + acetaldehyde + H(+)</text>
        <dbReference type="Rhea" id="RHEA:26281"/>
        <dbReference type="ChEBI" id="CHEBI:15343"/>
        <dbReference type="ChEBI" id="CHEBI:15377"/>
        <dbReference type="ChEBI" id="CHEBI:15378"/>
        <dbReference type="ChEBI" id="CHEBI:60062"/>
        <dbReference type="ChEBI" id="CHEBI:60063"/>
        <dbReference type="EC" id="3.7.1.12"/>
    </reaction>
</comment>
<comment type="pathway">
    <text>Cofactor biosynthesis; adenosylcobalamin biosynthesis; cob(II)yrinate a,c-diamide from sirohydrochlorin (anaerobic route): step 5/10.</text>
</comment>
<comment type="similarity">
    <text evidence="2">Belongs to the CbiG family.</text>
</comment>
<reference key="1">
    <citation type="journal article" date="1993" name="J. Bacteriol.">
        <title>Characterization of the cobalamin (vitamin B12) biosynthetic genes of Salmonella typhimurium.</title>
        <authorList>
            <person name="Roth J.R."/>
            <person name="Lawrence J.G."/>
            <person name="Rubenfield M."/>
            <person name="Kieffer-Higgins S."/>
            <person name="Church G.M."/>
        </authorList>
    </citation>
    <scope>NUCLEOTIDE SEQUENCE [GENOMIC DNA]</scope>
    <source>
        <strain>LT2 / SGSC1412 / ATCC 700720</strain>
    </source>
</reference>
<reference key="2">
    <citation type="journal article" date="2001" name="Nature">
        <title>Complete genome sequence of Salmonella enterica serovar Typhimurium LT2.</title>
        <authorList>
            <person name="McClelland M."/>
            <person name="Sanderson K.E."/>
            <person name="Spieth J."/>
            <person name="Clifton S.W."/>
            <person name="Latreille P."/>
            <person name="Courtney L."/>
            <person name="Porwollik S."/>
            <person name="Ali J."/>
            <person name="Dante M."/>
            <person name="Du F."/>
            <person name="Hou S."/>
            <person name="Layman D."/>
            <person name="Leonard S."/>
            <person name="Nguyen C."/>
            <person name="Scott K."/>
            <person name="Holmes A."/>
            <person name="Grewal N."/>
            <person name="Mulvaney E."/>
            <person name="Ryan E."/>
            <person name="Sun H."/>
            <person name="Florea L."/>
            <person name="Miller W."/>
            <person name="Stoneking T."/>
            <person name="Nhan M."/>
            <person name="Waterston R."/>
            <person name="Wilson R.K."/>
        </authorList>
    </citation>
    <scope>NUCLEOTIDE SEQUENCE [LARGE SCALE GENOMIC DNA]</scope>
    <source>
        <strain>LT2 / SGSC1412 / ATCC 700720</strain>
    </source>
</reference>
<reference key="3">
    <citation type="journal article" date="2006" name="J. Am. Chem. Soc.">
        <title>Genetically engineered synthesis and structural characterization of cobalt-precorrin 5A and -5B, two new intermediates on the anaerobic pathway to vitamin B12: definition of the roles of the CbiF and CbiG enzymes.</title>
        <authorList>
            <person name="Kajiwara Y."/>
            <person name="Santander P.J."/>
            <person name="Roessner C.A."/>
            <person name="Perez L.M."/>
            <person name="Scott A.I."/>
        </authorList>
    </citation>
    <scope>FUNCTION</scope>
</reference>
<keyword id="KW-0169">Cobalamin biosynthesis</keyword>
<keyword id="KW-0378">Hydrolase</keyword>
<keyword id="KW-1185">Reference proteome</keyword>